<feature type="chain" id="PRO_1000071316" description="2-C-methyl-D-erythritol 4-phosphate cytidylyltransferase">
    <location>
        <begin position="1"/>
        <end position="228"/>
    </location>
</feature>
<feature type="site" description="Transition state stabilizer" evidence="1">
    <location>
        <position position="17"/>
    </location>
</feature>
<feature type="site" description="Transition state stabilizer" evidence="1">
    <location>
        <position position="24"/>
    </location>
</feature>
<feature type="site" description="Positions MEP for the nucleophilic attack" evidence="1">
    <location>
        <position position="150"/>
    </location>
</feature>
<feature type="site" description="Positions MEP for the nucleophilic attack" evidence="1">
    <location>
        <position position="206"/>
    </location>
</feature>
<organism>
    <name type="scientific">Actinobacillus pleuropneumoniae serotype 5b (strain L20)</name>
    <dbReference type="NCBI Taxonomy" id="416269"/>
    <lineage>
        <taxon>Bacteria</taxon>
        <taxon>Pseudomonadati</taxon>
        <taxon>Pseudomonadota</taxon>
        <taxon>Gammaproteobacteria</taxon>
        <taxon>Pasteurellales</taxon>
        <taxon>Pasteurellaceae</taxon>
        <taxon>Actinobacillus</taxon>
    </lineage>
</organism>
<gene>
    <name evidence="1" type="primary">ispD</name>
    <name type="ordered locus">APL_0802</name>
</gene>
<comment type="function">
    <text evidence="1">Catalyzes the formation of 4-diphosphocytidyl-2-C-methyl-D-erythritol from CTP and 2-C-methyl-D-erythritol 4-phosphate (MEP).</text>
</comment>
<comment type="catalytic activity">
    <reaction evidence="1">
        <text>2-C-methyl-D-erythritol 4-phosphate + CTP + H(+) = 4-CDP-2-C-methyl-D-erythritol + diphosphate</text>
        <dbReference type="Rhea" id="RHEA:13429"/>
        <dbReference type="ChEBI" id="CHEBI:15378"/>
        <dbReference type="ChEBI" id="CHEBI:33019"/>
        <dbReference type="ChEBI" id="CHEBI:37563"/>
        <dbReference type="ChEBI" id="CHEBI:57823"/>
        <dbReference type="ChEBI" id="CHEBI:58262"/>
        <dbReference type="EC" id="2.7.7.60"/>
    </reaction>
</comment>
<comment type="pathway">
    <text evidence="1">Isoprenoid biosynthesis; isopentenyl diphosphate biosynthesis via DXP pathway; isopentenyl diphosphate from 1-deoxy-D-xylulose 5-phosphate: step 2/6.</text>
</comment>
<comment type="similarity">
    <text evidence="1">Belongs to the IspD/TarI cytidylyltransferase family. IspD subfamily.</text>
</comment>
<dbReference type="EC" id="2.7.7.60" evidence="1"/>
<dbReference type="EMBL" id="CP000569">
    <property type="protein sequence ID" value="ABN73898.1"/>
    <property type="molecule type" value="Genomic_DNA"/>
</dbReference>
<dbReference type="RefSeq" id="WP_005604389.1">
    <property type="nucleotide sequence ID" value="NC_009053.1"/>
</dbReference>
<dbReference type="SMR" id="A3N0G2"/>
<dbReference type="STRING" id="416269.APL_0802"/>
<dbReference type="EnsemblBacteria" id="ABN73898">
    <property type="protein sequence ID" value="ABN73898"/>
    <property type="gene ID" value="APL_0802"/>
</dbReference>
<dbReference type="KEGG" id="apl:APL_0802"/>
<dbReference type="eggNOG" id="COG1211">
    <property type="taxonomic scope" value="Bacteria"/>
</dbReference>
<dbReference type="HOGENOM" id="CLU_061281_3_1_6"/>
<dbReference type="UniPathway" id="UPA00056">
    <property type="reaction ID" value="UER00093"/>
</dbReference>
<dbReference type="Proteomes" id="UP000001432">
    <property type="component" value="Chromosome"/>
</dbReference>
<dbReference type="GO" id="GO:0050518">
    <property type="term" value="F:2-C-methyl-D-erythritol 4-phosphate cytidylyltransferase activity"/>
    <property type="evidence" value="ECO:0007669"/>
    <property type="project" value="UniProtKB-UniRule"/>
</dbReference>
<dbReference type="GO" id="GO:0019288">
    <property type="term" value="P:isopentenyl diphosphate biosynthetic process, methylerythritol 4-phosphate pathway"/>
    <property type="evidence" value="ECO:0007669"/>
    <property type="project" value="UniProtKB-UniRule"/>
</dbReference>
<dbReference type="CDD" id="cd02516">
    <property type="entry name" value="CDP-ME_synthetase"/>
    <property type="match status" value="1"/>
</dbReference>
<dbReference type="FunFam" id="3.90.550.10:FF:000003">
    <property type="entry name" value="2-C-methyl-D-erythritol 4-phosphate cytidylyltransferase"/>
    <property type="match status" value="1"/>
</dbReference>
<dbReference type="Gene3D" id="3.90.550.10">
    <property type="entry name" value="Spore Coat Polysaccharide Biosynthesis Protein SpsA, Chain A"/>
    <property type="match status" value="1"/>
</dbReference>
<dbReference type="HAMAP" id="MF_00108">
    <property type="entry name" value="IspD"/>
    <property type="match status" value="1"/>
</dbReference>
<dbReference type="InterPro" id="IPR001228">
    <property type="entry name" value="IspD"/>
</dbReference>
<dbReference type="InterPro" id="IPR034683">
    <property type="entry name" value="IspD/TarI"/>
</dbReference>
<dbReference type="InterPro" id="IPR050088">
    <property type="entry name" value="IspD/TarI_cytidylyltransf_bact"/>
</dbReference>
<dbReference type="InterPro" id="IPR018294">
    <property type="entry name" value="ISPD_synthase_CS"/>
</dbReference>
<dbReference type="InterPro" id="IPR029044">
    <property type="entry name" value="Nucleotide-diphossugar_trans"/>
</dbReference>
<dbReference type="NCBIfam" id="TIGR00453">
    <property type="entry name" value="ispD"/>
    <property type="match status" value="1"/>
</dbReference>
<dbReference type="PANTHER" id="PTHR32125">
    <property type="entry name" value="2-C-METHYL-D-ERYTHRITOL 4-PHOSPHATE CYTIDYLYLTRANSFERASE, CHLOROPLASTIC"/>
    <property type="match status" value="1"/>
</dbReference>
<dbReference type="PANTHER" id="PTHR32125:SF4">
    <property type="entry name" value="2-C-METHYL-D-ERYTHRITOL 4-PHOSPHATE CYTIDYLYLTRANSFERASE, CHLOROPLASTIC"/>
    <property type="match status" value="1"/>
</dbReference>
<dbReference type="Pfam" id="PF01128">
    <property type="entry name" value="IspD"/>
    <property type="match status" value="1"/>
</dbReference>
<dbReference type="SUPFAM" id="SSF53448">
    <property type="entry name" value="Nucleotide-diphospho-sugar transferases"/>
    <property type="match status" value="1"/>
</dbReference>
<dbReference type="PROSITE" id="PS01295">
    <property type="entry name" value="ISPD"/>
    <property type="match status" value="1"/>
</dbReference>
<reference key="1">
    <citation type="journal article" date="2008" name="J. Bacteriol.">
        <title>The complete genome sequence of Actinobacillus pleuropneumoniae L20 (serotype 5b).</title>
        <authorList>
            <person name="Foote S.J."/>
            <person name="Bosse J.T."/>
            <person name="Bouevitch A.B."/>
            <person name="Langford P.R."/>
            <person name="Young N.M."/>
            <person name="Nash J.H.E."/>
        </authorList>
    </citation>
    <scope>NUCLEOTIDE SEQUENCE [LARGE SCALE GENOMIC DNA]</scope>
    <source>
        <strain>L20</strain>
    </source>
</reference>
<keyword id="KW-0414">Isoprene biosynthesis</keyword>
<keyword id="KW-0548">Nucleotidyltransferase</keyword>
<keyword id="KW-1185">Reference proteome</keyword>
<keyword id="KW-0808">Transferase</keyword>
<evidence type="ECO:0000255" key="1">
    <source>
        <dbReference type="HAMAP-Rule" id="MF_00108"/>
    </source>
</evidence>
<name>ISPD_ACTP2</name>
<sequence length="228" mass="25537">MTRKIIAVIPASGVGSRMQAGLPKQYLKLQNKTILEHTLEIFLAHPDIEKIVVAVAETDPFYPQVALLDSPKIQIVFGGETRAHSVFNALQVIEDDSWVLVHDAARPCLKRSDLDKLLQIDDKQGAILATPAIDTMKRADGNKIMRTEDRSTLWHALTPQFFPTRLLKQALISAFKKNLTVTDEASAMEFSGYQPRLIAGRSDNLKITRPEDLALAEFYLTQNTEKKI</sequence>
<accession>A3N0G2</accession>
<protein>
    <recommendedName>
        <fullName evidence="1">2-C-methyl-D-erythritol 4-phosphate cytidylyltransferase</fullName>
        <ecNumber evidence="1">2.7.7.60</ecNumber>
    </recommendedName>
    <alternativeName>
        <fullName evidence="1">4-diphosphocytidyl-2C-methyl-D-erythritol synthase</fullName>
    </alternativeName>
    <alternativeName>
        <fullName evidence="1">MEP cytidylyltransferase</fullName>
        <shortName evidence="1">MCT</shortName>
    </alternativeName>
</protein>
<proteinExistence type="inferred from homology"/>